<reference key="1">
    <citation type="journal article" date="2003" name="Proc. Natl. Acad. Sci. U.S.A.">
        <title>Genome sequence of the cyanobacterium Prochlorococcus marinus SS120, a nearly minimal oxyphototrophic genome.</title>
        <authorList>
            <person name="Dufresne A."/>
            <person name="Salanoubat M."/>
            <person name="Partensky F."/>
            <person name="Artiguenave F."/>
            <person name="Axmann I.M."/>
            <person name="Barbe V."/>
            <person name="Duprat S."/>
            <person name="Galperin M.Y."/>
            <person name="Koonin E.V."/>
            <person name="Le Gall F."/>
            <person name="Makarova K.S."/>
            <person name="Ostrowski M."/>
            <person name="Oztas S."/>
            <person name="Robert C."/>
            <person name="Rogozin I.B."/>
            <person name="Scanlan D.J."/>
            <person name="Tandeau de Marsac N."/>
            <person name="Weissenbach J."/>
            <person name="Wincker P."/>
            <person name="Wolf Y.I."/>
            <person name="Hess W.R."/>
        </authorList>
    </citation>
    <scope>NUCLEOTIDE SEQUENCE [LARGE SCALE GENOMIC DNA]</scope>
    <source>
        <strain>SARG / CCMP1375 / SS120</strain>
    </source>
</reference>
<organism>
    <name type="scientific">Prochlorococcus marinus (strain SARG / CCMP1375 / SS120)</name>
    <dbReference type="NCBI Taxonomy" id="167539"/>
    <lineage>
        <taxon>Bacteria</taxon>
        <taxon>Bacillati</taxon>
        <taxon>Cyanobacteriota</taxon>
        <taxon>Cyanophyceae</taxon>
        <taxon>Synechococcales</taxon>
        <taxon>Prochlorococcaceae</taxon>
        <taxon>Prochlorococcus</taxon>
    </lineage>
</organism>
<proteinExistence type="inferred from homology"/>
<accession>Q7VE30</accession>
<protein>
    <recommendedName>
        <fullName evidence="1">NAD(P)H-quinone oxidoreductase subunit 1</fullName>
        <ecNumber evidence="1">7.1.1.-</ecNumber>
    </recommendedName>
    <alternativeName>
        <fullName evidence="1">NAD(P)H dehydrogenase I subunit 1</fullName>
    </alternativeName>
    <alternativeName>
        <fullName evidence="1">NDH-1 subunit 1</fullName>
    </alternativeName>
    <alternativeName>
        <fullName evidence="1">NDH-A</fullName>
    </alternativeName>
</protein>
<sequence length="372" mass="40837">MNTGLDLEVSFNHLLQDMGLSSTISHLLWLPLPMLLVLTAALIGVLVTVWLERKISAAAQQRIGPEYAGALGILQPMADGLKLLVKEDIIPDKADNLLFTLGPVLVLIPVILSWLIIPFGQNLLISNVGIGIFLWIALSSIQPIGLLMSGYASNNKYSLLGGLRAAAQSISYEIPLALAVLAIVMMSNSLSTIDIVNQQNTLGFLSWNIWRQPVGFLIFWICALAECERLPFDLPEAEEELVAGYQTEYAGMKFALFYLGSYINLVLSSLLVSVLYLGGWGFPIPVELIANTLHQSINSPVIQIITASLGIVMTVFKTYLLVFLAILLRWTTPRVRIDQLLDLGWKFLLPISLVNLLFTAALKLVFPFAFGG</sequence>
<feature type="chain" id="PRO_0000240038" description="NAD(P)H-quinone oxidoreductase subunit 1">
    <location>
        <begin position="1"/>
        <end position="372"/>
    </location>
</feature>
<feature type="transmembrane region" description="Helical" evidence="1">
    <location>
        <begin position="27"/>
        <end position="47"/>
    </location>
</feature>
<feature type="transmembrane region" description="Helical" evidence="1">
    <location>
        <begin position="97"/>
        <end position="117"/>
    </location>
</feature>
<feature type="transmembrane region" description="Helical" evidence="1">
    <location>
        <begin position="128"/>
        <end position="148"/>
    </location>
</feature>
<feature type="transmembrane region" description="Helical" evidence="1">
    <location>
        <begin position="176"/>
        <end position="196"/>
    </location>
</feature>
<feature type="transmembrane region" description="Helical" evidence="1">
    <location>
        <begin position="204"/>
        <end position="224"/>
    </location>
</feature>
<feature type="transmembrane region" description="Helical" evidence="1">
    <location>
        <begin position="270"/>
        <end position="290"/>
    </location>
</feature>
<feature type="transmembrane region" description="Helical" evidence="1">
    <location>
        <begin position="308"/>
        <end position="328"/>
    </location>
</feature>
<feature type="transmembrane region" description="Helical" evidence="1">
    <location>
        <begin position="351"/>
        <end position="371"/>
    </location>
</feature>
<keyword id="KW-0472">Membrane</keyword>
<keyword id="KW-0520">NAD</keyword>
<keyword id="KW-0521">NADP</keyword>
<keyword id="KW-0618">Plastoquinone</keyword>
<keyword id="KW-0874">Quinone</keyword>
<keyword id="KW-1185">Reference proteome</keyword>
<keyword id="KW-0793">Thylakoid</keyword>
<keyword id="KW-1278">Translocase</keyword>
<keyword id="KW-0812">Transmembrane</keyword>
<keyword id="KW-1133">Transmembrane helix</keyword>
<dbReference type="EC" id="7.1.1.-" evidence="1"/>
<dbReference type="EMBL" id="AE017126">
    <property type="protein sequence ID" value="AAP99230.1"/>
    <property type="status" value="ALT_INIT"/>
    <property type="molecule type" value="Genomic_DNA"/>
</dbReference>
<dbReference type="RefSeq" id="NP_874578.1">
    <property type="nucleotide sequence ID" value="NC_005042.1"/>
</dbReference>
<dbReference type="SMR" id="Q7VE30"/>
<dbReference type="STRING" id="167539.Pro_0184"/>
<dbReference type="EnsemblBacteria" id="AAP99230">
    <property type="protein sequence ID" value="AAP99230"/>
    <property type="gene ID" value="Pro_0184"/>
</dbReference>
<dbReference type="KEGG" id="pma:Pro_0184"/>
<dbReference type="PATRIC" id="fig|167539.5.peg.191"/>
<dbReference type="eggNOG" id="COG1005">
    <property type="taxonomic scope" value="Bacteria"/>
</dbReference>
<dbReference type="HOGENOM" id="CLU_015134_0_1_3"/>
<dbReference type="OrthoDB" id="9803734at2"/>
<dbReference type="Proteomes" id="UP000001420">
    <property type="component" value="Chromosome"/>
</dbReference>
<dbReference type="GO" id="GO:0031676">
    <property type="term" value="C:plasma membrane-derived thylakoid membrane"/>
    <property type="evidence" value="ECO:0007669"/>
    <property type="project" value="UniProtKB-SubCell"/>
</dbReference>
<dbReference type="GO" id="GO:0003954">
    <property type="term" value="F:NADH dehydrogenase activity"/>
    <property type="evidence" value="ECO:0007669"/>
    <property type="project" value="TreeGrafter"/>
</dbReference>
<dbReference type="GO" id="GO:0016655">
    <property type="term" value="F:oxidoreductase activity, acting on NAD(P)H, quinone or similar compound as acceptor"/>
    <property type="evidence" value="ECO:0007669"/>
    <property type="project" value="UniProtKB-UniRule"/>
</dbReference>
<dbReference type="GO" id="GO:0048038">
    <property type="term" value="F:quinone binding"/>
    <property type="evidence" value="ECO:0007669"/>
    <property type="project" value="UniProtKB-KW"/>
</dbReference>
<dbReference type="GO" id="GO:0009060">
    <property type="term" value="P:aerobic respiration"/>
    <property type="evidence" value="ECO:0007669"/>
    <property type="project" value="TreeGrafter"/>
</dbReference>
<dbReference type="GO" id="GO:0019684">
    <property type="term" value="P:photosynthesis, light reaction"/>
    <property type="evidence" value="ECO:0007669"/>
    <property type="project" value="UniProtKB-UniRule"/>
</dbReference>
<dbReference type="HAMAP" id="MF_01350">
    <property type="entry name" value="NDH1_NuoH"/>
    <property type="match status" value="1"/>
</dbReference>
<dbReference type="InterPro" id="IPR001694">
    <property type="entry name" value="NADH_UbQ_OxRdtase_su1/FPO"/>
</dbReference>
<dbReference type="InterPro" id="IPR018086">
    <property type="entry name" value="NADH_UbQ_OxRdtase_su1_CS"/>
</dbReference>
<dbReference type="NCBIfam" id="NF004741">
    <property type="entry name" value="PRK06076.1-2"/>
    <property type="match status" value="1"/>
</dbReference>
<dbReference type="NCBIfam" id="NF004744">
    <property type="entry name" value="PRK06076.1-5"/>
    <property type="match status" value="1"/>
</dbReference>
<dbReference type="PANTHER" id="PTHR11432">
    <property type="entry name" value="NADH DEHYDROGENASE SUBUNIT 1"/>
    <property type="match status" value="1"/>
</dbReference>
<dbReference type="PANTHER" id="PTHR11432:SF3">
    <property type="entry name" value="NADH-UBIQUINONE OXIDOREDUCTASE CHAIN 1"/>
    <property type="match status" value="1"/>
</dbReference>
<dbReference type="Pfam" id="PF00146">
    <property type="entry name" value="NADHdh"/>
    <property type="match status" value="1"/>
</dbReference>
<dbReference type="PROSITE" id="PS00667">
    <property type="entry name" value="COMPLEX1_ND1_1"/>
    <property type="match status" value="1"/>
</dbReference>
<dbReference type="PROSITE" id="PS00668">
    <property type="entry name" value="COMPLEX1_ND1_2"/>
    <property type="match status" value="1"/>
</dbReference>
<gene>
    <name evidence="1" type="primary">ndhA</name>
    <name type="ordered locus">Pro_0184</name>
</gene>
<comment type="function">
    <text evidence="1">NDH-1 shuttles electrons from an unknown electron donor, via FMN and iron-sulfur (Fe-S) centers, to quinones in the respiratory and/or the photosynthetic chain. The immediate electron acceptor for the enzyme in this species is believed to be plastoquinone. Couples the redox reaction to proton translocation, and thus conserves the redox energy in a proton gradient.</text>
</comment>
<comment type="catalytic activity">
    <reaction evidence="1">
        <text>a plastoquinone + NADH + (n+1) H(+)(in) = a plastoquinol + NAD(+) + n H(+)(out)</text>
        <dbReference type="Rhea" id="RHEA:42608"/>
        <dbReference type="Rhea" id="RHEA-COMP:9561"/>
        <dbReference type="Rhea" id="RHEA-COMP:9562"/>
        <dbReference type="ChEBI" id="CHEBI:15378"/>
        <dbReference type="ChEBI" id="CHEBI:17757"/>
        <dbReference type="ChEBI" id="CHEBI:57540"/>
        <dbReference type="ChEBI" id="CHEBI:57945"/>
        <dbReference type="ChEBI" id="CHEBI:62192"/>
    </reaction>
</comment>
<comment type="catalytic activity">
    <reaction evidence="1">
        <text>a plastoquinone + NADPH + (n+1) H(+)(in) = a plastoquinol + NADP(+) + n H(+)(out)</text>
        <dbReference type="Rhea" id="RHEA:42612"/>
        <dbReference type="Rhea" id="RHEA-COMP:9561"/>
        <dbReference type="Rhea" id="RHEA-COMP:9562"/>
        <dbReference type="ChEBI" id="CHEBI:15378"/>
        <dbReference type="ChEBI" id="CHEBI:17757"/>
        <dbReference type="ChEBI" id="CHEBI:57783"/>
        <dbReference type="ChEBI" id="CHEBI:58349"/>
        <dbReference type="ChEBI" id="CHEBI:62192"/>
    </reaction>
</comment>
<comment type="subunit">
    <text evidence="1">NDH-1 is composed of at least 11 different subunits.</text>
</comment>
<comment type="subcellular location">
    <subcellularLocation>
        <location evidence="1">Cellular thylakoid membrane</location>
        <topology evidence="1">Multi-pass membrane protein</topology>
    </subcellularLocation>
</comment>
<comment type="similarity">
    <text evidence="1">Belongs to the complex I subunit 1 family.</text>
</comment>
<comment type="sequence caution" evidence="2">
    <conflict type="erroneous initiation">
        <sequence resource="EMBL-CDS" id="AAP99230"/>
    </conflict>
</comment>
<name>NU1C_PROMA</name>
<evidence type="ECO:0000255" key="1">
    <source>
        <dbReference type="HAMAP-Rule" id="MF_01350"/>
    </source>
</evidence>
<evidence type="ECO:0000305" key="2"/>